<feature type="chain" id="PRO_0000196923" description="2,3,4,5-tetrahydropyridine-2,6-dicarboxylate N-succinyltransferase">
    <location>
        <begin position="1"/>
        <end position="274"/>
    </location>
</feature>
<feature type="binding site" evidence="1">
    <location>
        <position position="104"/>
    </location>
    <ligand>
        <name>substrate</name>
    </ligand>
</feature>
<feature type="binding site" evidence="1">
    <location>
        <position position="141"/>
    </location>
    <ligand>
        <name>substrate</name>
    </ligand>
</feature>
<accession>P57323</accession>
<gene>
    <name evidence="1" type="primary">dapD</name>
    <name type="ordered locus">BU229</name>
</gene>
<name>DAPD_BUCAI</name>
<proteinExistence type="inferred from homology"/>
<keyword id="KW-0012">Acyltransferase</keyword>
<keyword id="KW-0028">Amino-acid biosynthesis</keyword>
<keyword id="KW-0963">Cytoplasm</keyword>
<keyword id="KW-0220">Diaminopimelate biosynthesis</keyword>
<keyword id="KW-0457">Lysine biosynthesis</keyword>
<keyword id="KW-1185">Reference proteome</keyword>
<keyword id="KW-0677">Repeat</keyword>
<keyword id="KW-0808">Transferase</keyword>
<sequence length="274" mass="31184">MKELKKIIEETYENKNKINLNNLDYEILQTIFRVIKLLNNGIIRISEKKDNTWITHEWLKKAVLLYIYIKENKFIEGSYTSYYDKVPLKYEKYNEKQFKKEKVRIVPPATIRYGAFINYNTIIMPSYINIGAYIDQGTMIDTWATIGSCAQIGKNVHISGGVGIGGVLEPLQNNPTIIEDNCFIGARSEIVEGVVIEKGCVISMGVFIGQSTKIYDRENGKIFYGRVPAHSVVVSGTLPSENRNYNLYAAIIVKKVDAKTLGKTEINQLLRNIK</sequence>
<organism>
    <name type="scientific">Buchnera aphidicola subsp. Acyrthosiphon pisum (strain APS)</name>
    <name type="common">Acyrthosiphon pisum symbiotic bacterium</name>
    <dbReference type="NCBI Taxonomy" id="107806"/>
    <lineage>
        <taxon>Bacteria</taxon>
        <taxon>Pseudomonadati</taxon>
        <taxon>Pseudomonadota</taxon>
        <taxon>Gammaproteobacteria</taxon>
        <taxon>Enterobacterales</taxon>
        <taxon>Erwiniaceae</taxon>
        <taxon>Buchnera</taxon>
    </lineage>
</organism>
<evidence type="ECO:0000255" key="1">
    <source>
        <dbReference type="HAMAP-Rule" id="MF_00811"/>
    </source>
</evidence>
<protein>
    <recommendedName>
        <fullName evidence="1">2,3,4,5-tetrahydropyridine-2,6-dicarboxylate N-succinyltransferase</fullName>
        <ecNumber evidence="1">2.3.1.117</ecNumber>
    </recommendedName>
    <alternativeName>
        <fullName evidence="1">Tetrahydrodipicolinate N-succinyltransferase</fullName>
        <shortName evidence="1">THDP succinyltransferase</shortName>
        <shortName evidence="1">THP succinyltransferase</shortName>
        <shortName evidence="1">Tetrahydropicolinate succinylase</shortName>
    </alternativeName>
</protein>
<reference key="1">
    <citation type="journal article" date="2000" name="Nature">
        <title>Genome sequence of the endocellular bacterial symbiont of aphids Buchnera sp. APS.</title>
        <authorList>
            <person name="Shigenobu S."/>
            <person name="Watanabe H."/>
            <person name="Hattori M."/>
            <person name="Sakaki Y."/>
            <person name="Ishikawa H."/>
        </authorList>
    </citation>
    <scope>NUCLEOTIDE SEQUENCE [LARGE SCALE GENOMIC DNA]</scope>
    <source>
        <strain>APS</strain>
    </source>
</reference>
<comment type="catalytic activity">
    <reaction evidence="1">
        <text>(S)-2,3,4,5-tetrahydrodipicolinate + succinyl-CoA + H2O = (S)-2-succinylamino-6-oxoheptanedioate + CoA</text>
        <dbReference type="Rhea" id="RHEA:17325"/>
        <dbReference type="ChEBI" id="CHEBI:15377"/>
        <dbReference type="ChEBI" id="CHEBI:15685"/>
        <dbReference type="ChEBI" id="CHEBI:16845"/>
        <dbReference type="ChEBI" id="CHEBI:57287"/>
        <dbReference type="ChEBI" id="CHEBI:57292"/>
        <dbReference type="EC" id="2.3.1.117"/>
    </reaction>
</comment>
<comment type="pathway">
    <text evidence="1">Amino-acid biosynthesis; L-lysine biosynthesis via DAP pathway; LL-2,6-diaminopimelate from (S)-tetrahydrodipicolinate (succinylase route): step 1/3.</text>
</comment>
<comment type="subunit">
    <text evidence="1">Homotrimer.</text>
</comment>
<comment type="subcellular location">
    <subcellularLocation>
        <location evidence="1">Cytoplasm</location>
    </subcellularLocation>
</comment>
<comment type="similarity">
    <text evidence="1">Belongs to the transferase hexapeptide repeat family.</text>
</comment>
<dbReference type="EC" id="2.3.1.117" evidence="1"/>
<dbReference type="EMBL" id="BA000003">
    <property type="protein sequence ID" value="BAB12944.1"/>
    <property type="molecule type" value="Genomic_DNA"/>
</dbReference>
<dbReference type="RefSeq" id="NP_240058.1">
    <property type="nucleotide sequence ID" value="NC_002528.1"/>
</dbReference>
<dbReference type="RefSeq" id="WP_009874185.1">
    <property type="nucleotide sequence ID" value="NC_002528.1"/>
</dbReference>
<dbReference type="SMR" id="P57323"/>
<dbReference type="STRING" id="563178.BUAP5A_224"/>
<dbReference type="EnsemblBacteria" id="BAB12944">
    <property type="protein sequence ID" value="BAB12944"/>
    <property type="gene ID" value="BAB12944"/>
</dbReference>
<dbReference type="KEGG" id="buc:BU229"/>
<dbReference type="PATRIC" id="fig|107806.10.peg.242"/>
<dbReference type="eggNOG" id="COG2171">
    <property type="taxonomic scope" value="Bacteria"/>
</dbReference>
<dbReference type="HOGENOM" id="CLU_050859_0_1_6"/>
<dbReference type="UniPathway" id="UPA00034">
    <property type="reaction ID" value="UER00019"/>
</dbReference>
<dbReference type="Proteomes" id="UP000001806">
    <property type="component" value="Chromosome"/>
</dbReference>
<dbReference type="GO" id="GO:0005737">
    <property type="term" value="C:cytoplasm"/>
    <property type="evidence" value="ECO:0007669"/>
    <property type="project" value="UniProtKB-SubCell"/>
</dbReference>
<dbReference type="GO" id="GO:0008666">
    <property type="term" value="F:2,3,4,5-tetrahydropyridine-2,6-dicarboxylate N-succinyltransferase activity"/>
    <property type="evidence" value="ECO:0007669"/>
    <property type="project" value="UniProtKB-UniRule"/>
</dbReference>
<dbReference type="GO" id="GO:0019877">
    <property type="term" value="P:diaminopimelate biosynthetic process"/>
    <property type="evidence" value="ECO:0007669"/>
    <property type="project" value="UniProtKB-UniRule"/>
</dbReference>
<dbReference type="GO" id="GO:0009089">
    <property type="term" value="P:lysine biosynthetic process via diaminopimelate"/>
    <property type="evidence" value="ECO:0007669"/>
    <property type="project" value="UniProtKB-UniRule"/>
</dbReference>
<dbReference type="CDD" id="cd03350">
    <property type="entry name" value="LbH_THP_succinylT"/>
    <property type="match status" value="1"/>
</dbReference>
<dbReference type="Gene3D" id="2.160.10.10">
    <property type="entry name" value="Hexapeptide repeat proteins"/>
    <property type="match status" value="1"/>
</dbReference>
<dbReference type="Gene3D" id="1.10.166.10">
    <property type="entry name" value="Tetrahydrodipicolinate-N-succinyltransferase, N-terminal domain"/>
    <property type="match status" value="1"/>
</dbReference>
<dbReference type="HAMAP" id="MF_00811">
    <property type="entry name" value="DapD"/>
    <property type="match status" value="1"/>
</dbReference>
<dbReference type="InterPro" id="IPR005664">
    <property type="entry name" value="DapD_Trfase_Hexpep_rpt_fam"/>
</dbReference>
<dbReference type="InterPro" id="IPR001451">
    <property type="entry name" value="Hexapep"/>
</dbReference>
<dbReference type="InterPro" id="IPR018357">
    <property type="entry name" value="Hexapep_transf_CS"/>
</dbReference>
<dbReference type="InterPro" id="IPR023180">
    <property type="entry name" value="THP_succinylTrfase_dom1"/>
</dbReference>
<dbReference type="InterPro" id="IPR037133">
    <property type="entry name" value="THP_succinylTrfase_N_sf"/>
</dbReference>
<dbReference type="InterPro" id="IPR050179">
    <property type="entry name" value="Trans_hexapeptide_repeat"/>
</dbReference>
<dbReference type="InterPro" id="IPR011004">
    <property type="entry name" value="Trimer_LpxA-like_sf"/>
</dbReference>
<dbReference type="NCBIfam" id="TIGR00965">
    <property type="entry name" value="dapD"/>
    <property type="match status" value="1"/>
</dbReference>
<dbReference type="NCBIfam" id="NF008808">
    <property type="entry name" value="PRK11830.1"/>
    <property type="match status" value="1"/>
</dbReference>
<dbReference type="PANTHER" id="PTHR43300:SF10">
    <property type="entry name" value="2,3,4,5-TETRAHYDROPYRIDINE-2,6-DICARBOXYLATE N-ACETYLTRANSFERASE"/>
    <property type="match status" value="1"/>
</dbReference>
<dbReference type="PANTHER" id="PTHR43300">
    <property type="entry name" value="ACETYLTRANSFERASE"/>
    <property type="match status" value="1"/>
</dbReference>
<dbReference type="Pfam" id="PF14602">
    <property type="entry name" value="Hexapep_2"/>
    <property type="match status" value="1"/>
</dbReference>
<dbReference type="Pfam" id="PF14805">
    <property type="entry name" value="THDPS_N_2"/>
    <property type="match status" value="1"/>
</dbReference>
<dbReference type="SUPFAM" id="SSF51161">
    <property type="entry name" value="Trimeric LpxA-like enzymes"/>
    <property type="match status" value="1"/>
</dbReference>
<dbReference type="PROSITE" id="PS00101">
    <property type="entry name" value="HEXAPEP_TRANSFERASES"/>
    <property type="match status" value="1"/>
</dbReference>